<comment type="function">
    <text evidence="1">UDP-glucuronosyltransferase (UGT) that catalyzes phase II biotransformation reactions in which lipophilic substrates are conjugated with glucuronic acid to increase the metabolite's water solubility, thereby facilitating excretion into either the urine or bile. Essential for the elimination and detoxification of drugs, xenobiotics and endogenous compounds. Catalyzes the glucuronidation of endogenous steroid hormones such as androgens (testosterones) and estrogens (estradiol and estriol). Contributes to bile acid (BA) detoxification by catalyzing the glucuronidation of BA substrates, which are natural detergents for dietary lipids absorption. Shows a high affinity to aliphatic odorants such as citronellol as well as olfactory tissue specificity, and therefore may be involved in olfaction.</text>
</comment>
<comment type="catalytic activity">
    <reaction evidence="1">
        <text>glucuronate acceptor + UDP-alpha-D-glucuronate = acceptor beta-D-glucuronoside + UDP + H(+)</text>
        <dbReference type="Rhea" id="RHEA:21032"/>
        <dbReference type="ChEBI" id="CHEBI:15378"/>
        <dbReference type="ChEBI" id="CHEBI:58052"/>
        <dbReference type="ChEBI" id="CHEBI:58223"/>
        <dbReference type="ChEBI" id="CHEBI:132367"/>
        <dbReference type="ChEBI" id="CHEBI:132368"/>
        <dbReference type="EC" id="2.4.1.17"/>
    </reaction>
    <physiologicalReaction direction="left-to-right" evidence="1">
        <dbReference type="Rhea" id="RHEA:21033"/>
    </physiologicalReaction>
</comment>
<comment type="catalytic activity">
    <reaction evidence="1">
        <text>16beta,17beta-estriol + UDP-alpha-D-glucuronate = 16beta,17beta-estriol 16-O-(beta-D-glucuronate) + UDP + H(+)</text>
        <dbReference type="Rhea" id="RHEA:52880"/>
        <dbReference type="ChEBI" id="CHEBI:15378"/>
        <dbReference type="ChEBI" id="CHEBI:58052"/>
        <dbReference type="ChEBI" id="CHEBI:58223"/>
        <dbReference type="ChEBI" id="CHEBI:87620"/>
        <dbReference type="ChEBI" id="CHEBI:136886"/>
    </reaction>
    <physiologicalReaction direction="left-to-right" evidence="1">
        <dbReference type="Rhea" id="RHEA:52881"/>
    </physiologicalReaction>
</comment>
<comment type="catalytic activity">
    <reaction evidence="1">
        <text>16alpha,17alpha-estriol + UDP-alpha-D-glucuronate = 16alpha,17alpha-estriol 16-O-(beta-D-glucuronate) + UDP + H(+)</text>
        <dbReference type="Rhea" id="RHEA:52920"/>
        <dbReference type="ChEBI" id="CHEBI:15378"/>
        <dbReference type="ChEBI" id="CHEBI:42156"/>
        <dbReference type="ChEBI" id="CHEBI:58052"/>
        <dbReference type="ChEBI" id="CHEBI:58223"/>
        <dbReference type="ChEBI" id="CHEBI:136884"/>
    </reaction>
    <physiologicalReaction direction="left-to-right" evidence="1">
        <dbReference type="Rhea" id="RHEA:52921"/>
    </physiologicalReaction>
</comment>
<comment type="catalytic activity">
    <reaction evidence="1">
        <text>17alpha-estradiol + UDP-alpha-D-glucuronate = 17alpha-estradiol 17-O-(beta-D-glucuronate) + UDP + H(+)</text>
        <dbReference type="Rhea" id="RHEA:52872"/>
        <dbReference type="ChEBI" id="CHEBI:15378"/>
        <dbReference type="ChEBI" id="CHEBI:17160"/>
        <dbReference type="ChEBI" id="CHEBI:58052"/>
        <dbReference type="ChEBI" id="CHEBI:58223"/>
        <dbReference type="ChEBI" id="CHEBI:136642"/>
    </reaction>
    <physiologicalReaction direction="left-to-right" evidence="1">
        <dbReference type="Rhea" id="RHEA:52873"/>
    </physiologicalReaction>
</comment>
<comment type="catalytic activity">
    <reaction evidence="1">
        <text>17alpha-estradiol + UDP-alpha-D-glucuronate = 17alpha-estradiol 3-O-(beta-D-glucuronate) + UDP + H(+)</text>
        <dbReference type="Rhea" id="RHEA:52868"/>
        <dbReference type="ChEBI" id="CHEBI:15378"/>
        <dbReference type="ChEBI" id="CHEBI:17160"/>
        <dbReference type="ChEBI" id="CHEBI:57529"/>
        <dbReference type="ChEBI" id="CHEBI:58052"/>
        <dbReference type="ChEBI" id="CHEBI:58223"/>
    </reaction>
    <physiologicalReaction direction="left-to-right" evidence="1">
        <dbReference type="Rhea" id="RHEA:52869"/>
    </physiologicalReaction>
</comment>
<comment type="catalytic activity">
    <reaction evidence="1">
        <text>17beta-estradiol + UDP-alpha-D-glucuronate = 17beta-estradiol 3-O-(beta-D-glucuronate) + UDP + H(+)</text>
        <dbReference type="Rhea" id="RHEA:52460"/>
        <dbReference type="ChEBI" id="CHEBI:15378"/>
        <dbReference type="ChEBI" id="CHEBI:16469"/>
        <dbReference type="ChEBI" id="CHEBI:58052"/>
        <dbReference type="ChEBI" id="CHEBI:58223"/>
        <dbReference type="ChEBI" id="CHEBI:136641"/>
    </reaction>
    <physiologicalReaction direction="left-to-right" evidence="1">
        <dbReference type="Rhea" id="RHEA:52461"/>
    </physiologicalReaction>
</comment>
<comment type="catalytic activity">
    <reaction evidence="1">
        <text>17beta-estradiol + UDP-alpha-D-glucuronate = 17beta-estradiol 17-O-(beta-D-glucuronate) + UDP + H(+)</text>
        <dbReference type="Rhea" id="RHEA:52464"/>
        <dbReference type="ChEBI" id="CHEBI:15378"/>
        <dbReference type="ChEBI" id="CHEBI:16469"/>
        <dbReference type="ChEBI" id="CHEBI:58052"/>
        <dbReference type="ChEBI" id="CHEBI:58223"/>
        <dbReference type="ChEBI" id="CHEBI:82961"/>
    </reaction>
    <physiologicalReaction direction="left-to-right" evidence="1">
        <dbReference type="Rhea" id="RHEA:52465"/>
    </physiologicalReaction>
</comment>
<comment type="catalytic activity">
    <reaction evidence="1">
        <text>testosterone + UDP-alpha-D-glucuronate = testosterone 17-O-(beta-D-glucuronate) + UDP + H(+)</text>
        <dbReference type="Rhea" id="RHEA:52456"/>
        <dbReference type="ChEBI" id="CHEBI:15378"/>
        <dbReference type="ChEBI" id="CHEBI:17347"/>
        <dbReference type="ChEBI" id="CHEBI:58052"/>
        <dbReference type="ChEBI" id="CHEBI:58223"/>
        <dbReference type="ChEBI" id="CHEBI:136639"/>
    </reaction>
    <physiologicalReaction direction="left-to-right" evidence="1">
        <dbReference type="Rhea" id="RHEA:52457"/>
    </physiologicalReaction>
</comment>
<comment type="catalytic activity">
    <reaction evidence="1">
        <text>epitestosterone + UDP-alpha-D-glucuronate = epitestosterone 17-O-(beta-D-glucuronate) + UDP + H(+)</text>
        <dbReference type="Rhea" id="RHEA:52568"/>
        <dbReference type="ChEBI" id="CHEBI:15378"/>
        <dbReference type="ChEBI" id="CHEBI:42534"/>
        <dbReference type="ChEBI" id="CHEBI:58052"/>
        <dbReference type="ChEBI" id="CHEBI:58223"/>
        <dbReference type="ChEBI" id="CHEBI:136673"/>
    </reaction>
    <physiologicalReaction direction="left-to-right" evidence="1">
        <dbReference type="Rhea" id="RHEA:52569"/>
    </physiologicalReaction>
</comment>
<comment type="catalytic activity">
    <reaction evidence="1">
        <text>lithocholate + UDP-alpha-D-glucuronate = lithocholoyl-3-O-(beta-D-glucuronate) + UDP + H(+)</text>
        <dbReference type="Rhea" id="RHEA:53028"/>
        <dbReference type="ChEBI" id="CHEBI:15378"/>
        <dbReference type="ChEBI" id="CHEBI:29744"/>
        <dbReference type="ChEBI" id="CHEBI:58052"/>
        <dbReference type="ChEBI" id="CHEBI:58223"/>
        <dbReference type="ChEBI" id="CHEBI:136965"/>
    </reaction>
    <physiologicalReaction direction="left-to-right" evidence="1">
        <dbReference type="Rhea" id="RHEA:53029"/>
    </physiologicalReaction>
</comment>
<comment type="catalytic activity">
    <reaction evidence="1">
        <text>lithocholate + UDP-alpha-D-glucuronate = lithocholoyl-24-O-(beta-D-glucuronate) + UDP</text>
        <dbReference type="Rhea" id="RHEA:52952"/>
        <dbReference type="ChEBI" id="CHEBI:29744"/>
        <dbReference type="ChEBI" id="CHEBI:58052"/>
        <dbReference type="ChEBI" id="CHEBI:58223"/>
        <dbReference type="ChEBI" id="CHEBI:136902"/>
    </reaction>
    <physiologicalReaction direction="left-to-right" evidence="1">
        <dbReference type="Rhea" id="RHEA:52953"/>
    </physiologicalReaction>
</comment>
<comment type="catalytic activity">
    <reaction evidence="1">
        <text>deoxycholate + UDP-alpha-D-glucuronate = deoxycholoyl-24-O-(beta-D-glucuronate) + UDP</text>
        <dbReference type="Rhea" id="RHEA:52948"/>
        <dbReference type="ChEBI" id="CHEBI:23614"/>
        <dbReference type="ChEBI" id="CHEBI:58052"/>
        <dbReference type="ChEBI" id="CHEBI:58223"/>
        <dbReference type="ChEBI" id="CHEBI:136901"/>
    </reaction>
    <physiologicalReaction direction="left-to-right" evidence="1">
        <dbReference type="Rhea" id="RHEA:52949"/>
    </physiologicalReaction>
</comment>
<comment type="catalytic activity">
    <reaction evidence="1">
        <text>hyodeoxycholate + UDP-alpha-D-glucuronate = hyodeoxycholate 6-O-(beta-D-glucuronate) + UDP + H(+)</text>
        <dbReference type="Rhea" id="RHEA:52964"/>
        <dbReference type="ChEBI" id="CHEBI:15378"/>
        <dbReference type="ChEBI" id="CHEBI:58052"/>
        <dbReference type="ChEBI" id="CHEBI:58223"/>
        <dbReference type="ChEBI" id="CHEBI:58875"/>
        <dbReference type="ChEBI" id="CHEBI:136905"/>
    </reaction>
    <physiologicalReaction direction="left-to-right" evidence="1">
        <dbReference type="Rhea" id="RHEA:52965"/>
    </physiologicalReaction>
</comment>
<comment type="catalytic activity">
    <reaction evidence="1">
        <text>hyocholate + UDP-alpha-D-glucuronate = hyocholoyl-24-O-(beta-D-glucuronate) + UDP</text>
        <dbReference type="Rhea" id="RHEA:52960"/>
        <dbReference type="ChEBI" id="CHEBI:58052"/>
        <dbReference type="ChEBI" id="CHEBI:58223"/>
        <dbReference type="ChEBI" id="CHEBI:133661"/>
        <dbReference type="ChEBI" id="CHEBI:136904"/>
    </reaction>
    <physiologicalReaction direction="left-to-right" evidence="1">
        <dbReference type="Rhea" id="RHEA:52961"/>
    </physiologicalReaction>
</comment>
<comment type="subcellular location">
    <subcellularLocation>
        <location evidence="1">Membrane</location>
        <topology evidence="3">Single-pass type I membrane protein</topology>
    </subcellularLocation>
</comment>
<comment type="tissue specificity">
    <text evidence="4">Olfactory epithelium. Mainly found in the sustentacular cells and to a lesser extent in Bowman's gland cells. Also expressed in the olfactory sensory neuron nuclei. Neuronal localization within the olfactory bulb is mainly found in the deeper granular cells.</text>
</comment>
<comment type="similarity">
    <text evidence="5">Belongs to the UDP-glycosyltransferase family.</text>
</comment>
<feature type="signal peptide" evidence="3">
    <location>
        <begin position="1"/>
        <end position="20"/>
    </location>
</feature>
<feature type="chain" id="PRO_0000036024" description="UDP-glucuronosyltransferase 2A1">
    <location>
        <begin position="21"/>
        <end position="527"/>
    </location>
</feature>
<feature type="topological domain" description="Extracellular" evidence="3">
    <location>
        <begin position="21"/>
        <end position="490"/>
    </location>
</feature>
<feature type="transmembrane region" description="Helical" evidence="3">
    <location>
        <begin position="491"/>
        <end position="507"/>
    </location>
</feature>
<feature type="topological domain" description="Cytoplasmic" evidence="3">
    <location>
        <begin position="508"/>
        <end position="527"/>
    </location>
</feature>
<feature type="modified residue" description="N6-succinyllysine" evidence="2">
    <location>
        <position position="134"/>
    </location>
</feature>
<feature type="glycosylation site" description="N-linked (GlcNAc...) asparagine" evidence="3">
    <location>
        <position position="49"/>
    </location>
</feature>
<feature type="glycosylation site" description="N-linked (GlcNAc...) asparagine" evidence="3">
    <location>
        <position position="313"/>
    </location>
</feature>
<proteinExistence type="evidence at transcript level"/>
<gene>
    <name evidence="6" type="primary">Ugt2a1</name>
    <name type="synonym">Ugt2a-1</name>
</gene>
<protein>
    <recommendedName>
        <fullName evidence="5">UDP-glucuronosyltransferase 2A1</fullName>
        <shortName>UDPGT 2A1</shortName>
        <shortName>UGT2A1</shortName>
        <ecNumber evidence="1">2.4.1.17</ecNumber>
    </recommendedName>
    <alternativeName>
        <fullName>UGT-OLF</fullName>
    </alternativeName>
</protein>
<sequence length="527" mass="59916">MLKNILLWSLQLSLLGMSLGGNVLIWPMEGSHWLNVKIIIDELLRKEHNVTVLVASGALFITPSVSPSLTFEIYPVPFGKEKIESVIKDFVLTWLENRPSPSTIWTFYKEMAKVIEEFHLVSRGICDGVLKNEKLMTKLQRGKFEVLLSDPVFPCGDIVALKLGIPFIYSLRFSPASTVEKHCGKVPFPPSYVPAILSELTDQMSFADRVRNFISYRMQDYMFETLWKQWDSYYSKALGRPTTLCETMGKAEIWLMRTYWDFEFPRPYLPNFEFVGGLHCKPAKPLPKEMEEFVQTSGEHGVVVFSLGSMVKNLTEEKANLIASALAQIPQKVLWRYKGKIPATLGSNTRLFDWIPQNDLLGHPKTRAFITHGGTNGIYEAIYHGIPMVGVPMFADQPDNIAHMKAKGAAVEVNMNTMTSADLLSAVRAVINEPFYKENAMRLSRIHHDQPVKPLDRAVFWIEFVMRHKGAKHLRVAAHDLSWFQYHSLDVIGFLLACMASAILLVIKCCLFVFQKIGKTXKKNKRD</sequence>
<accession>P36510</accession>
<name>UD2A1_RAT</name>
<keyword id="KW-0325">Glycoprotein</keyword>
<keyword id="KW-0328">Glycosyltransferase</keyword>
<keyword id="KW-0443">Lipid metabolism</keyword>
<keyword id="KW-0472">Membrane</keyword>
<keyword id="KW-0552">Olfaction</keyword>
<keyword id="KW-1185">Reference proteome</keyword>
<keyword id="KW-0716">Sensory transduction</keyword>
<keyword id="KW-0732">Signal</keyword>
<keyword id="KW-0808">Transferase</keyword>
<keyword id="KW-0812">Transmembrane</keyword>
<keyword id="KW-1133">Transmembrane helix</keyword>
<dbReference type="EC" id="2.4.1.17" evidence="1"/>
<dbReference type="EMBL" id="X57565">
    <property type="protein sequence ID" value="CAA40797.1"/>
    <property type="molecule type" value="Genomic_DNA"/>
</dbReference>
<dbReference type="PIR" id="S15089">
    <property type="entry name" value="S15089"/>
</dbReference>
<dbReference type="RefSeq" id="NP_071564.1">
    <property type="nucleotide sequence ID" value="NM_022228.1"/>
</dbReference>
<dbReference type="FunCoup" id="P36510">
    <property type="interactions" value="228"/>
</dbReference>
<dbReference type="CAZy" id="GT1">
    <property type="family name" value="Glycosyltransferase Family 1"/>
</dbReference>
<dbReference type="GlyCosmos" id="P36510">
    <property type="glycosylation" value="2 sites, No reported glycans"/>
</dbReference>
<dbReference type="GlyGen" id="P36510">
    <property type="glycosylation" value="2 sites"/>
</dbReference>
<dbReference type="PhosphoSitePlus" id="P36510"/>
<dbReference type="GeneID" id="63867"/>
<dbReference type="KEGG" id="rno:63867"/>
<dbReference type="UCSC" id="RGD:69432">
    <property type="organism name" value="rat"/>
</dbReference>
<dbReference type="AGR" id="RGD:69432"/>
<dbReference type="CTD" id="10941"/>
<dbReference type="RGD" id="69432">
    <property type="gene designation" value="Ugt2a1"/>
</dbReference>
<dbReference type="InParanoid" id="P36510"/>
<dbReference type="Reactome" id="R-RNO-156588">
    <property type="pathway name" value="Glucuronidation"/>
</dbReference>
<dbReference type="Reactome" id="R-RNO-9749641">
    <property type="pathway name" value="Aspirin ADME"/>
</dbReference>
<dbReference type="PRO" id="PR:P36510"/>
<dbReference type="Proteomes" id="UP000002494">
    <property type="component" value="Unplaced"/>
</dbReference>
<dbReference type="GO" id="GO:0016020">
    <property type="term" value="C:membrane"/>
    <property type="evidence" value="ECO:0007669"/>
    <property type="project" value="UniProtKB-SubCell"/>
</dbReference>
<dbReference type="GO" id="GO:0015020">
    <property type="term" value="F:glucuronosyltransferase activity"/>
    <property type="evidence" value="ECO:0000266"/>
    <property type="project" value="RGD"/>
</dbReference>
<dbReference type="GO" id="GO:0008206">
    <property type="term" value="P:bile acid metabolic process"/>
    <property type="evidence" value="ECO:0000266"/>
    <property type="project" value="RGD"/>
</dbReference>
<dbReference type="GO" id="GO:0009608">
    <property type="term" value="P:response to symbiont"/>
    <property type="evidence" value="ECO:0000266"/>
    <property type="project" value="RGD"/>
</dbReference>
<dbReference type="GO" id="GO:0009636">
    <property type="term" value="P:response to toxic substance"/>
    <property type="evidence" value="ECO:0000304"/>
    <property type="project" value="RGD"/>
</dbReference>
<dbReference type="GO" id="GO:0007606">
    <property type="term" value="P:sensory perception of chemical stimulus"/>
    <property type="evidence" value="ECO:0000266"/>
    <property type="project" value="RGD"/>
</dbReference>
<dbReference type="GO" id="GO:0007608">
    <property type="term" value="P:sensory perception of smell"/>
    <property type="evidence" value="ECO:0007669"/>
    <property type="project" value="UniProtKB-KW"/>
</dbReference>
<dbReference type="GO" id="GO:0006805">
    <property type="term" value="P:xenobiotic metabolic process"/>
    <property type="evidence" value="ECO:0000266"/>
    <property type="project" value="RGD"/>
</dbReference>
<dbReference type="CDD" id="cd03784">
    <property type="entry name" value="GT1_Gtf-like"/>
    <property type="match status" value="1"/>
</dbReference>
<dbReference type="FunFam" id="3.40.50.2000:FF:000001">
    <property type="entry name" value="UDP-glucuronosyltransferase"/>
    <property type="match status" value="1"/>
</dbReference>
<dbReference type="FunFam" id="3.40.50.2000:FF:000081">
    <property type="entry name" value="UDP-glucuronosyltransferase 2A2"/>
    <property type="match status" value="1"/>
</dbReference>
<dbReference type="Gene3D" id="3.40.50.2000">
    <property type="entry name" value="Glycogen Phosphorylase B"/>
    <property type="match status" value="2"/>
</dbReference>
<dbReference type="InterPro" id="IPR050271">
    <property type="entry name" value="UDP-glycosyltransferase"/>
</dbReference>
<dbReference type="InterPro" id="IPR002213">
    <property type="entry name" value="UDP_glucos_trans"/>
</dbReference>
<dbReference type="InterPro" id="IPR035595">
    <property type="entry name" value="UDP_glycos_trans_CS"/>
</dbReference>
<dbReference type="PANTHER" id="PTHR48043">
    <property type="entry name" value="EG:EG0003.4 PROTEIN-RELATED"/>
    <property type="match status" value="1"/>
</dbReference>
<dbReference type="PANTHER" id="PTHR48043:SF140">
    <property type="entry name" value="UDP-GLUCURONOSYLTRANSFERASE 2A1"/>
    <property type="match status" value="1"/>
</dbReference>
<dbReference type="Pfam" id="PF00201">
    <property type="entry name" value="UDPGT"/>
    <property type="match status" value="1"/>
</dbReference>
<dbReference type="SUPFAM" id="SSF53756">
    <property type="entry name" value="UDP-Glycosyltransferase/glycogen phosphorylase"/>
    <property type="match status" value="1"/>
</dbReference>
<dbReference type="PROSITE" id="PS00375">
    <property type="entry name" value="UDPGT"/>
    <property type="match status" value="1"/>
</dbReference>
<reference key="1">
    <citation type="journal article" date="1991" name="Nature">
        <title>Odorant signal termination by olfactory UDP glucuronosyl transferase.</title>
        <authorList>
            <person name="Lazard D."/>
            <person name="Zupko K."/>
            <person name="Poria Y."/>
            <person name="Nef P."/>
            <person name="Lazarovits J."/>
            <person name="Horn S."/>
            <person name="Khen M."/>
            <person name="Lancet D."/>
        </authorList>
    </citation>
    <scope>NUCLEOTIDE SEQUENCE [GENOMIC DNA]</scope>
</reference>
<reference key="2">
    <citation type="journal article" date="2001" name="Brain Res. Mol. Brain Res.">
        <title>Rat olfactory bulb and epithelium UDP-glucuronosyltransferase 2A1 (UGT2A1) expression: in situ mRNA localization and quantitative analysis.</title>
        <authorList>
            <person name="Heydel J.-M."/>
            <person name="Leclerc S."/>
            <person name="Bernard P."/>
            <person name="Pelczar H."/>
            <person name="Gradinaru D."/>
            <person name="Magdalou J."/>
            <person name="Minn A."/>
            <person name="Artur Y."/>
            <person name="Goudonnet H."/>
        </authorList>
    </citation>
    <scope>FUNCTION</scope>
    <scope>TISSUE SPECIFICITY</scope>
</reference>
<evidence type="ECO:0000250" key="1">
    <source>
        <dbReference type="UniProtKB" id="P0DTE4"/>
    </source>
</evidence>
<evidence type="ECO:0000250" key="2">
    <source>
        <dbReference type="UniProtKB" id="Q8BWQ1"/>
    </source>
</evidence>
<evidence type="ECO:0000255" key="3"/>
<evidence type="ECO:0000269" key="4">
    <source>
    </source>
</evidence>
<evidence type="ECO:0000305" key="5"/>
<evidence type="ECO:0000312" key="6">
    <source>
        <dbReference type="RGD" id="69432"/>
    </source>
</evidence>
<organism>
    <name type="scientific">Rattus norvegicus</name>
    <name type="common">Rat</name>
    <dbReference type="NCBI Taxonomy" id="10116"/>
    <lineage>
        <taxon>Eukaryota</taxon>
        <taxon>Metazoa</taxon>
        <taxon>Chordata</taxon>
        <taxon>Craniata</taxon>
        <taxon>Vertebrata</taxon>
        <taxon>Euteleostomi</taxon>
        <taxon>Mammalia</taxon>
        <taxon>Eutheria</taxon>
        <taxon>Euarchontoglires</taxon>
        <taxon>Glires</taxon>
        <taxon>Rodentia</taxon>
        <taxon>Myomorpha</taxon>
        <taxon>Muroidea</taxon>
        <taxon>Muridae</taxon>
        <taxon>Murinae</taxon>
        <taxon>Rattus</taxon>
    </lineage>
</organism>